<accession>A5D0W6</accession>
<dbReference type="EC" id="3.1.-.-" evidence="1"/>
<dbReference type="EC" id="3.6.4.-" evidence="1"/>
<dbReference type="EMBL" id="AP009389">
    <property type="protein sequence ID" value="BAF60120.1"/>
    <property type="molecule type" value="Genomic_DNA"/>
</dbReference>
<dbReference type="SMR" id="A5D0W6"/>
<dbReference type="STRING" id="370438.PTH_1939"/>
<dbReference type="KEGG" id="pth:PTH_1939"/>
<dbReference type="eggNOG" id="COG1193">
    <property type="taxonomic scope" value="Bacteria"/>
</dbReference>
<dbReference type="HOGENOM" id="CLU_011252_2_1_9"/>
<dbReference type="Proteomes" id="UP000006556">
    <property type="component" value="Chromosome"/>
</dbReference>
<dbReference type="GO" id="GO:0005524">
    <property type="term" value="F:ATP binding"/>
    <property type="evidence" value="ECO:0007669"/>
    <property type="project" value="UniProtKB-UniRule"/>
</dbReference>
<dbReference type="GO" id="GO:0016887">
    <property type="term" value="F:ATP hydrolysis activity"/>
    <property type="evidence" value="ECO:0007669"/>
    <property type="project" value="InterPro"/>
</dbReference>
<dbReference type="GO" id="GO:0140664">
    <property type="term" value="F:ATP-dependent DNA damage sensor activity"/>
    <property type="evidence" value="ECO:0007669"/>
    <property type="project" value="InterPro"/>
</dbReference>
<dbReference type="GO" id="GO:0004519">
    <property type="term" value="F:endonuclease activity"/>
    <property type="evidence" value="ECO:0007669"/>
    <property type="project" value="UniProtKB-UniRule"/>
</dbReference>
<dbReference type="GO" id="GO:0030983">
    <property type="term" value="F:mismatched DNA binding"/>
    <property type="evidence" value="ECO:0007669"/>
    <property type="project" value="InterPro"/>
</dbReference>
<dbReference type="GO" id="GO:0043023">
    <property type="term" value="F:ribosomal large subunit binding"/>
    <property type="evidence" value="ECO:0007669"/>
    <property type="project" value="UniProtKB-UniRule"/>
</dbReference>
<dbReference type="GO" id="GO:0019843">
    <property type="term" value="F:rRNA binding"/>
    <property type="evidence" value="ECO:0007669"/>
    <property type="project" value="UniProtKB-UniRule"/>
</dbReference>
<dbReference type="GO" id="GO:0006298">
    <property type="term" value="P:mismatch repair"/>
    <property type="evidence" value="ECO:0007669"/>
    <property type="project" value="InterPro"/>
</dbReference>
<dbReference type="GO" id="GO:0045910">
    <property type="term" value="P:negative regulation of DNA recombination"/>
    <property type="evidence" value="ECO:0007669"/>
    <property type="project" value="InterPro"/>
</dbReference>
<dbReference type="GO" id="GO:0072344">
    <property type="term" value="P:rescue of stalled ribosome"/>
    <property type="evidence" value="ECO:0007669"/>
    <property type="project" value="UniProtKB-UniRule"/>
</dbReference>
<dbReference type="CDD" id="cd03280">
    <property type="entry name" value="ABC_MutS2"/>
    <property type="match status" value="1"/>
</dbReference>
<dbReference type="FunFam" id="3.40.50.300:FF:000830">
    <property type="entry name" value="Endonuclease MutS2"/>
    <property type="match status" value="1"/>
</dbReference>
<dbReference type="Gene3D" id="3.30.1370.110">
    <property type="match status" value="1"/>
</dbReference>
<dbReference type="Gene3D" id="3.40.50.300">
    <property type="entry name" value="P-loop containing nucleotide triphosphate hydrolases"/>
    <property type="match status" value="1"/>
</dbReference>
<dbReference type="HAMAP" id="MF_00092">
    <property type="entry name" value="MutS2"/>
    <property type="match status" value="1"/>
</dbReference>
<dbReference type="InterPro" id="IPR000432">
    <property type="entry name" value="DNA_mismatch_repair_MutS_C"/>
</dbReference>
<dbReference type="InterPro" id="IPR007696">
    <property type="entry name" value="DNA_mismatch_repair_MutS_core"/>
</dbReference>
<dbReference type="InterPro" id="IPR036187">
    <property type="entry name" value="DNA_mismatch_repair_MutS_sf"/>
</dbReference>
<dbReference type="InterPro" id="IPR046893">
    <property type="entry name" value="MSSS"/>
</dbReference>
<dbReference type="InterPro" id="IPR045076">
    <property type="entry name" value="MutS"/>
</dbReference>
<dbReference type="InterPro" id="IPR005747">
    <property type="entry name" value="MutS2"/>
</dbReference>
<dbReference type="InterPro" id="IPR027417">
    <property type="entry name" value="P-loop_NTPase"/>
</dbReference>
<dbReference type="InterPro" id="IPR002625">
    <property type="entry name" value="Smr_dom"/>
</dbReference>
<dbReference type="InterPro" id="IPR036063">
    <property type="entry name" value="Smr_dom_sf"/>
</dbReference>
<dbReference type="NCBIfam" id="TIGR01069">
    <property type="entry name" value="mutS2"/>
    <property type="match status" value="1"/>
</dbReference>
<dbReference type="PANTHER" id="PTHR48466:SF2">
    <property type="entry name" value="OS10G0509000 PROTEIN"/>
    <property type="match status" value="1"/>
</dbReference>
<dbReference type="PANTHER" id="PTHR48466">
    <property type="entry name" value="OS10G0509000 PROTEIN-RELATED"/>
    <property type="match status" value="1"/>
</dbReference>
<dbReference type="Pfam" id="PF20297">
    <property type="entry name" value="MSSS"/>
    <property type="match status" value="1"/>
</dbReference>
<dbReference type="Pfam" id="PF00488">
    <property type="entry name" value="MutS_V"/>
    <property type="match status" value="1"/>
</dbReference>
<dbReference type="Pfam" id="PF01713">
    <property type="entry name" value="Smr"/>
    <property type="match status" value="1"/>
</dbReference>
<dbReference type="PIRSF" id="PIRSF005814">
    <property type="entry name" value="MutS_YshD"/>
    <property type="match status" value="1"/>
</dbReference>
<dbReference type="SMART" id="SM00534">
    <property type="entry name" value="MUTSac"/>
    <property type="match status" value="1"/>
</dbReference>
<dbReference type="SMART" id="SM00533">
    <property type="entry name" value="MUTSd"/>
    <property type="match status" value="1"/>
</dbReference>
<dbReference type="SMART" id="SM00463">
    <property type="entry name" value="SMR"/>
    <property type="match status" value="1"/>
</dbReference>
<dbReference type="SUPFAM" id="SSF48334">
    <property type="entry name" value="DNA repair protein MutS, domain III"/>
    <property type="match status" value="1"/>
</dbReference>
<dbReference type="SUPFAM" id="SSF52540">
    <property type="entry name" value="P-loop containing nucleoside triphosphate hydrolases"/>
    <property type="match status" value="1"/>
</dbReference>
<dbReference type="SUPFAM" id="SSF160443">
    <property type="entry name" value="SMR domain-like"/>
    <property type="match status" value="1"/>
</dbReference>
<dbReference type="PROSITE" id="PS00486">
    <property type="entry name" value="DNA_MISMATCH_REPAIR_2"/>
    <property type="match status" value="1"/>
</dbReference>
<dbReference type="PROSITE" id="PS50828">
    <property type="entry name" value="SMR"/>
    <property type="match status" value="1"/>
</dbReference>
<organism>
    <name type="scientific">Pelotomaculum thermopropionicum (strain DSM 13744 / JCM 10971 / SI)</name>
    <dbReference type="NCBI Taxonomy" id="370438"/>
    <lineage>
        <taxon>Bacteria</taxon>
        <taxon>Bacillati</taxon>
        <taxon>Bacillota</taxon>
        <taxon>Clostridia</taxon>
        <taxon>Eubacteriales</taxon>
        <taxon>Desulfotomaculaceae</taxon>
        <taxon>Pelotomaculum</taxon>
    </lineage>
</organism>
<gene>
    <name evidence="1" type="primary">mutS2</name>
    <name evidence="1" type="synonym">rqcU</name>
    <name type="ordered locus">PTH_1939</name>
</gene>
<name>MUTS2_PELTS</name>
<reference key="1">
    <citation type="journal article" date="2008" name="Genome Res.">
        <title>The genome of Pelotomaculum thermopropionicum reveals niche-associated evolution in anaerobic microbiota.</title>
        <authorList>
            <person name="Kosaka T."/>
            <person name="Kato S."/>
            <person name="Shimoyama T."/>
            <person name="Ishii S."/>
            <person name="Abe T."/>
            <person name="Watanabe K."/>
        </authorList>
    </citation>
    <scope>NUCLEOTIDE SEQUENCE [LARGE SCALE GENOMIC DNA]</scope>
    <source>
        <strain>DSM 13744 / JCM 10971 / SI</strain>
    </source>
</reference>
<protein>
    <recommendedName>
        <fullName evidence="1">Endonuclease MutS2</fullName>
        <ecNumber evidence="1">3.1.-.-</ecNumber>
    </recommendedName>
    <alternativeName>
        <fullName evidence="1">Ribosome-associated protein quality control-upstream factor</fullName>
        <shortName evidence="1">RQC-upstream factor</shortName>
        <shortName evidence="1">RqcU</shortName>
        <ecNumber evidence="1">3.6.4.-</ecNumber>
    </alternativeName>
</protein>
<proteinExistence type="inferred from homology"/>
<evidence type="ECO:0000255" key="1">
    <source>
        <dbReference type="HAMAP-Rule" id="MF_00092"/>
    </source>
</evidence>
<feature type="chain" id="PRO_1000093376" description="Endonuclease MutS2">
    <location>
        <begin position="1"/>
        <end position="785"/>
    </location>
</feature>
<feature type="domain" description="Smr" evidence="1">
    <location>
        <begin position="710"/>
        <end position="785"/>
    </location>
</feature>
<feature type="binding site" evidence="1">
    <location>
        <begin position="331"/>
        <end position="338"/>
    </location>
    <ligand>
        <name>ATP</name>
        <dbReference type="ChEBI" id="CHEBI:30616"/>
    </ligand>
</feature>
<sequence length="785" mass="86175">MDKKALKRLEYHKVLEQLAACSGSSLGREKIMAMEPLDNLQAILRKQEETSEGRKLLRLEPFAEAGGWKDIRAQLRKAGQGAILDPEELLAVADTLTAGRTIRKFFQDRQEQYPLLYEVSSALVSLPELERKIKNAILPGGEVADGASPELAQIRRRLAAAQAQVKEHLEHIIRSPSYQKYLQEPIVTIREGRYVVPVKIEHRSQVPGIVHDQSASGATLFIEPMAVVEKNNELRRLMAAEKREIQRILAELSAGVAQHAGPIGASLEALGELDFIMARARYSQKLDAWAPLLEGEACMDIRRGRHPLLQGEVVPIDIRLGADFDTLVITGPNTGGKTVALKTAGLLVLMAQSGLHIPAGEGSRLGIFRQVFADIGDEQSIEQSLSTFSSHMNNIVEIIGKAGPDSLVLLDELGAGTDPAEGAALAQSILEKLHSAGAKTVATTHYGELKDFALTRERVENASVEFDAITLRPTYRLLIGKPGRSNAFEIAARLGLPEEVVKRARSFLTAEHIQAEELMRSLEKTQQEAEAERRRAAELASEARALKERYEKIEADLASKRESILSKAAEEAQALVRAARLEAEAAVRELREKMAEEAARERENAIREAREKLRKLQQRVGRAVPEKTVPGEAPAGLRPGEEVFLTRYNQKGYVLEPPGAGGEVLVQVGVIKMNVPLRELRRVKEARPAGGQSEVAGVLLNKAREISPELDLRGLYADEALLEVEKYLDDAYLAGLSRVYLIHGKGTGSLRAAIHRQLSGHRRVKSFRLGEHGEGGLGVTVVELA</sequence>
<keyword id="KW-0067">ATP-binding</keyword>
<keyword id="KW-0238">DNA-binding</keyword>
<keyword id="KW-0255">Endonuclease</keyword>
<keyword id="KW-0378">Hydrolase</keyword>
<keyword id="KW-0540">Nuclease</keyword>
<keyword id="KW-0547">Nucleotide-binding</keyword>
<keyword id="KW-1185">Reference proteome</keyword>
<keyword id="KW-0694">RNA-binding</keyword>
<keyword id="KW-0699">rRNA-binding</keyword>
<comment type="function">
    <text evidence="1">Endonuclease that is involved in the suppression of homologous recombination and thus may have a key role in the control of bacterial genetic diversity.</text>
</comment>
<comment type="function">
    <text evidence="1">Acts as a ribosome collision sensor, splitting the ribosome into its 2 subunits. Detects stalled/collided 70S ribosomes which it binds and splits by an ATP-hydrolysis driven conformational change. Acts upstream of the ribosome quality control system (RQC), a ribosome-associated complex that mediates the extraction of incompletely synthesized nascent chains from stalled ribosomes and their subsequent degradation. Probably generates substrates for RQC.</text>
</comment>
<comment type="subunit">
    <text evidence="1">Homodimer. Binds to stalled ribosomes, contacting rRNA.</text>
</comment>
<comment type="similarity">
    <text evidence="1">Belongs to the DNA mismatch repair MutS family. MutS2 subfamily.</text>
</comment>